<protein>
    <recommendedName>
        <fullName evidence="1">Aspartate--ammonia ligase</fullName>
        <ecNumber evidence="1">6.3.1.1</ecNumber>
    </recommendedName>
    <alternativeName>
        <fullName evidence="1">Asparagine synthetase A</fullName>
    </alternativeName>
</protein>
<gene>
    <name evidence="1" type="primary">asnA</name>
    <name type="ordered locus">Bcer98_1427</name>
</gene>
<organism>
    <name type="scientific">Bacillus cytotoxicus (strain DSM 22905 / CIP 110041 / 391-98 / NVH 391-98)</name>
    <dbReference type="NCBI Taxonomy" id="315749"/>
    <lineage>
        <taxon>Bacteria</taxon>
        <taxon>Bacillati</taxon>
        <taxon>Bacillota</taxon>
        <taxon>Bacilli</taxon>
        <taxon>Bacillales</taxon>
        <taxon>Bacillaceae</taxon>
        <taxon>Bacillus</taxon>
        <taxon>Bacillus cereus group</taxon>
    </lineage>
</organism>
<evidence type="ECO:0000255" key="1">
    <source>
        <dbReference type="HAMAP-Rule" id="MF_00555"/>
    </source>
</evidence>
<feature type="chain" id="PRO_1000081980" description="Aspartate--ammonia ligase">
    <location>
        <begin position="1"/>
        <end position="327"/>
    </location>
</feature>
<name>ASNA_BACCN</name>
<proteinExistence type="inferred from homology"/>
<accession>A7GNN8</accession>
<sequence length="327" mass="38101">MYQSLMTVRETQIAIKEVKTFFEDQLAKRLGLFRVSAPLFVTKKSGLNDHLNGVERPIEFDMLHSGEELEIVHSLAKWKRFALHEYGYEAGEGLYTNMNAIRRDEELDATHSIYVDQWDWEKIVQKEWRTVEYLQETVRTIYGIFKDLEDHLFEKYPFLGKYLPEDIAFITSQELEDKYPELTPKEREHAIAKEYGAVFIIGIGDVLRSGEKHDGRAADYDDWKLNGDILFWHPVLQSSFELSSMGIRVDSQSLDEQLTKAGEDFKRDYDFHKGILEDVLPLTIGGGIGQSRMCMYFLRKAHIGEVQSSVWPDEMREACKKENIHLF</sequence>
<comment type="catalytic activity">
    <reaction evidence="1">
        <text>L-aspartate + NH4(+) + ATP = L-asparagine + AMP + diphosphate + H(+)</text>
        <dbReference type="Rhea" id="RHEA:11372"/>
        <dbReference type="ChEBI" id="CHEBI:15378"/>
        <dbReference type="ChEBI" id="CHEBI:28938"/>
        <dbReference type="ChEBI" id="CHEBI:29991"/>
        <dbReference type="ChEBI" id="CHEBI:30616"/>
        <dbReference type="ChEBI" id="CHEBI:33019"/>
        <dbReference type="ChEBI" id="CHEBI:58048"/>
        <dbReference type="ChEBI" id="CHEBI:456215"/>
        <dbReference type="EC" id="6.3.1.1"/>
    </reaction>
</comment>
<comment type="pathway">
    <text evidence="1">Amino-acid biosynthesis; L-asparagine biosynthesis; L-asparagine from L-aspartate (ammonia route): step 1/1.</text>
</comment>
<comment type="subcellular location">
    <subcellularLocation>
        <location evidence="1">Cytoplasm</location>
    </subcellularLocation>
</comment>
<comment type="similarity">
    <text evidence="1">Belongs to the class-II aminoacyl-tRNA synthetase family. AsnA subfamily.</text>
</comment>
<keyword id="KW-0028">Amino-acid biosynthesis</keyword>
<keyword id="KW-0061">Asparagine biosynthesis</keyword>
<keyword id="KW-0067">ATP-binding</keyword>
<keyword id="KW-0963">Cytoplasm</keyword>
<keyword id="KW-0436">Ligase</keyword>
<keyword id="KW-0547">Nucleotide-binding</keyword>
<reference key="1">
    <citation type="journal article" date="2008" name="Chem. Biol. Interact.">
        <title>Extending the Bacillus cereus group genomics to putative food-borne pathogens of different toxicity.</title>
        <authorList>
            <person name="Lapidus A."/>
            <person name="Goltsman E."/>
            <person name="Auger S."/>
            <person name="Galleron N."/>
            <person name="Segurens B."/>
            <person name="Dossat C."/>
            <person name="Land M.L."/>
            <person name="Broussolle V."/>
            <person name="Brillard J."/>
            <person name="Guinebretiere M.-H."/>
            <person name="Sanchis V."/>
            <person name="Nguen-the C."/>
            <person name="Lereclus D."/>
            <person name="Richardson P."/>
            <person name="Wincker P."/>
            <person name="Weissenbach J."/>
            <person name="Ehrlich S.D."/>
            <person name="Sorokin A."/>
        </authorList>
    </citation>
    <scope>NUCLEOTIDE SEQUENCE [LARGE SCALE GENOMIC DNA]</scope>
    <source>
        <strain>DSM 22905 / CIP 110041 / 391-98 / NVH 391-98</strain>
    </source>
</reference>
<dbReference type="EC" id="6.3.1.1" evidence="1"/>
<dbReference type="EMBL" id="CP000764">
    <property type="protein sequence ID" value="ABS21746.1"/>
    <property type="molecule type" value="Genomic_DNA"/>
</dbReference>
<dbReference type="RefSeq" id="WP_012093919.1">
    <property type="nucleotide sequence ID" value="NC_009674.1"/>
</dbReference>
<dbReference type="SMR" id="A7GNN8"/>
<dbReference type="STRING" id="315749.Bcer98_1427"/>
<dbReference type="GeneID" id="33896767"/>
<dbReference type="KEGG" id="bcy:Bcer98_1427"/>
<dbReference type="eggNOG" id="COG2502">
    <property type="taxonomic scope" value="Bacteria"/>
</dbReference>
<dbReference type="HOGENOM" id="CLU_071543_0_0_9"/>
<dbReference type="OrthoDB" id="9766088at2"/>
<dbReference type="UniPathway" id="UPA00134">
    <property type="reaction ID" value="UER00194"/>
</dbReference>
<dbReference type="Proteomes" id="UP000002300">
    <property type="component" value="Chromosome"/>
</dbReference>
<dbReference type="GO" id="GO:0005829">
    <property type="term" value="C:cytosol"/>
    <property type="evidence" value="ECO:0007669"/>
    <property type="project" value="TreeGrafter"/>
</dbReference>
<dbReference type="GO" id="GO:0004071">
    <property type="term" value="F:aspartate-ammonia ligase activity"/>
    <property type="evidence" value="ECO:0007669"/>
    <property type="project" value="UniProtKB-UniRule"/>
</dbReference>
<dbReference type="GO" id="GO:0005524">
    <property type="term" value="F:ATP binding"/>
    <property type="evidence" value="ECO:0007669"/>
    <property type="project" value="UniProtKB-UniRule"/>
</dbReference>
<dbReference type="GO" id="GO:0140096">
    <property type="term" value="F:catalytic activity, acting on a protein"/>
    <property type="evidence" value="ECO:0007669"/>
    <property type="project" value="UniProtKB-ARBA"/>
</dbReference>
<dbReference type="GO" id="GO:0016740">
    <property type="term" value="F:transferase activity"/>
    <property type="evidence" value="ECO:0007669"/>
    <property type="project" value="UniProtKB-ARBA"/>
</dbReference>
<dbReference type="GO" id="GO:0070981">
    <property type="term" value="P:L-asparagine biosynthetic process"/>
    <property type="evidence" value="ECO:0007669"/>
    <property type="project" value="UniProtKB-UniRule"/>
</dbReference>
<dbReference type="CDD" id="cd00645">
    <property type="entry name" value="AsnA"/>
    <property type="match status" value="1"/>
</dbReference>
<dbReference type="Gene3D" id="3.30.930.10">
    <property type="entry name" value="Bira Bifunctional Protein, Domain 2"/>
    <property type="match status" value="1"/>
</dbReference>
<dbReference type="HAMAP" id="MF_00555">
    <property type="entry name" value="AsnA"/>
    <property type="match status" value="1"/>
</dbReference>
<dbReference type="InterPro" id="IPR006195">
    <property type="entry name" value="aa-tRNA-synth_II"/>
</dbReference>
<dbReference type="InterPro" id="IPR045864">
    <property type="entry name" value="aa-tRNA-synth_II/BPL/LPL"/>
</dbReference>
<dbReference type="InterPro" id="IPR004618">
    <property type="entry name" value="AsnA"/>
</dbReference>
<dbReference type="NCBIfam" id="TIGR00669">
    <property type="entry name" value="asnA"/>
    <property type="match status" value="1"/>
</dbReference>
<dbReference type="PANTHER" id="PTHR30073">
    <property type="entry name" value="ASPARTATE--AMMONIA LIGASE"/>
    <property type="match status" value="1"/>
</dbReference>
<dbReference type="PANTHER" id="PTHR30073:SF5">
    <property type="entry name" value="ASPARTATE--AMMONIA LIGASE"/>
    <property type="match status" value="1"/>
</dbReference>
<dbReference type="Pfam" id="PF03590">
    <property type="entry name" value="AsnA"/>
    <property type="match status" value="1"/>
</dbReference>
<dbReference type="PIRSF" id="PIRSF001555">
    <property type="entry name" value="Asp_ammon_ligase"/>
    <property type="match status" value="1"/>
</dbReference>
<dbReference type="SUPFAM" id="SSF55681">
    <property type="entry name" value="Class II aaRS and biotin synthetases"/>
    <property type="match status" value="1"/>
</dbReference>
<dbReference type="PROSITE" id="PS50862">
    <property type="entry name" value="AA_TRNA_LIGASE_II"/>
    <property type="match status" value="1"/>
</dbReference>